<sequence length="502" mass="56499">MAFKLSTKHLADIGAQTEKSIRIPSYDRNDVKEGIVHVGVGGFHRAHLAVYVDKLMQSHGVRDYAICGVGLQPADASMRDVLASQDHMYTVIERSAAGSTAHVVGSIRNFLFAPDDREAVIAKMAHPDTHIVSLTITESGYYYNENTHELQSEHPDIQHDLDPANAAKPKTTFGFLYAAMVRRREQGLKPFTVLSCDNMLKNGSITRNMLQSFAKLKDPSMADWIAQYGGFPNAMVDRITPRTSDPDIKELADKFKIDDAWPVVTEPFMQWVVEDKFADGRPPFDLVGVQVVKDVKDVEQFEKHKLRLLNASHSAMGYPGQLAGFKYVHEVMEHPLYRKFIWQMMQEEVKPLLPEIPGVDIDAYCNTLMERFSNPTIMDQLPRIALNSSGKMPQFVMPSIAEAIWVTGPFRRLVFVAACWFRYVLGVDDKGNKFEVDDPMREELQSKAQAGGTKPHEILSIKSLFGDDLRGDERFLKEVTQAMEDIARDGVMATMPKFVNDA</sequence>
<evidence type="ECO:0000250" key="1"/>
<evidence type="ECO:0000305" key="2"/>
<accession>A4QQN1</accession>
<accession>G4NJS3</accession>
<accession>Q2KEC3</accession>
<dbReference type="EC" id="1.1.1.67"/>
<dbReference type="EMBL" id="CM000230">
    <property type="protein sequence ID" value="EAQ71706.1"/>
    <property type="molecule type" value="Genomic_DNA"/>
</dbReference>
<dbReference type="EMBL" id="CM001237">
    <property type="protein sequence ID" value="EHA45740.1"/>
    <property type="molecule type" value="Genomic_DNA"/>
</dbReference>
<dbReference type="RefSeq" id="XP_003720483.1">
    <property type="nucleotide sequence ID" value="XM_003720435.1"/>
</dbReference>
<dbReference type="SMR" id="A4QQN1"/>
<dbReference type="FunCoup" id="A4QQN1">
    <property type="interactions" value="46"/>
</dbReference>
<dbReference type="STRING" id="242507.A4QQN1"/>
<dbReference type="EnsemblFungi" id="MGG_10334T0">
    <property type="protein sequence ID" value="MGG_10334T0"/>
    <property type="gene ID" value="MGG_10334"/>
</dbReference>
<dbReference type="GeneID" id="2681909"/>
<dbReference type="KEGG" id="mgr:MGG_10334"/>
<dbReference type="VEuPathDB" id="FungiDB:MGG_10334"/>
<dbReference type="eggNOG" id="ENOG502QT30">
    <property type="taxonomic scope" value="Eukaryota"/>
</dbReference>
<dbReference type="HOGENOM" id="CLU_027324_0_1_1"/>
<dbReference type="InParanoid" id="A4QQN1"/>
<dbReference type="OMA" id="IVASWAR"/>
<dbReference type="OrthoDB" id="418169at2759"/>
<dbReference type="Proteomes" id="UP000009058">
    <property type="component" value="Chromosome 7"/>
</dbReference>
<dbReference type="GO" id="GO:0050086">
    <property type="term" value="F:mannitol 2-dehydrogenase activity"/>
    <property type="evidence" value="ECO:0007669"/>
    <property type="project" value="UniProtKB-EC"/>
</dbReference>
<dbReference type="GO" id="GO:0046029">
    <property type="term" value="F:mannitol dehydrogenase activity"/>
    <property type="evidence" value="ECO:0007669"/>
    <property type="project" value="TreeGrafter"/>
</dbReference>
<dbReference type="FunFam" id="3.40.50.720:FF:000129">
    <property type="entry name" value="D-mannonate oxidoreductase"/>
    <property type="match status" value="1"/>
</dbReference>
<dbReference type="FunFam" id="1.10.1040.10:FF:000028">
    <property type="entry name" value="Mannitol 2-dehydrogenase"/>
    <property type="match status" value="1"/>
</dbReference>
<dbReference type="Gene3D" id="1.10.1040.10">
    <property type="entry name" value="N-(1-d-carboxylethyl)-l-norvaline Dehydrogenase, domain 2"/>
    <property type="match status" value="1"/>
</dbReference>
<dbReference type="Gene3D" id="3.40.50.720">
    <property type="entry name" value="NAD(P)-binding Rossmann-like Domain"/>
    <property type="match status" value="1"/>
</dbReference>
<dbReference type="InterPro" id="IPR008927">
    <property type="entry name" value="6-PGluconate_DH-like_C_sf"/>
</dbReference>
<dbReference type="InterPro" id="IPR013328">
    <property type="entry name" value="6PGD_dom2"/>
</dbReference>
<dbReference type="InterPro" id="IPR000669">
    <property type="entry name" value="Mannitol_DH"/>
</dbReference>
<dbReference type="InterPro" id="IPR050988">
    <property type="entry name" value="Mannitol_DH/Oxidoreductase"/>
</dbReference>
<dbReference type="InterPro" id="IPR013118">
    <property type="entry name" value="Mannitol_DH_C"/>
</dbReference>
<dbReference type="InterPro" id="IPR013131">
    <property type="entry name" value="Mannitol_DH_N"/>
</dbReference>
<dbReference type="InterPro" id="IPR036291">
    <property type="entry name" value="NAD(P)-bd_dom_sf"/>
</dbReference>
<dbReference type="PANTHER" id="PTHR43362:SF1">
    <property type="entry name" value="MANNITOL DEHYDROGENASE 2-RELATED"/>
    <property type="match status" value="1"/>
</dbReference>
<dbReference type="PANTHER" id="PTHR43362">
    <property type="entry name" value="MANNITOL DEHYDROGENASE DSF1-RELATED"/>
    <property type="match status" value="1"/>
</dbReference>
<dbReference type="Pfam" id="PF01232">
    <property type="entry name" value="Mannitol_dh"/>
    <property type="match status" value="1"/>
</dbReference>
<dbReference type="Pfam" id="PF08125">
    <property type="entry name" value="Mannitol_dh_C"/>
    <property type="match status" value="1"/>
</dbReference>
<dbReference type="PRINTS" id="PR00084">
    <property type="entry name" value="MTLDHDRGNASE"/>
</dbReference>
<dbReference type="SUPFAM" id="SSF48179">
    <property type="entry name" value="6-phosphogluconate dehydrogenase C-terminal domain-like"/>
    <property type="match status" value="1"/>
</dbReference>
<dbReference type="SUPFAM" id="SSF51735">
    <property type="entry name" value="NAD(P)-binding Rossmann-fold domains"/>
    <property type="match status" value="1"/>
</dbReference>
<keyword id="KW-0520">NAD</keyword>
<keyword id="KW-0560">Oxidoreductase</keyword>
<keyword id="KW-1185">Reference proteome</keyword>
<proteinExistence type="inferred from homology"/>
<protein>
    <recommendedName>
        <fullName>Mannitol 2-dehydrogenase</fullName>
        <shortName>M2DH</shortName>
        <shortName>MDH</shortName>
        <ecNumber>1.1.1.67</ecNumber>
    </recommendedName>
</protein>
<gene>
    <name type="ORF">MGCH7_ch7g1113</name>
    <name type="ORF">MGG_10334</name>
</gene>
<organism>
    <name type="scientific">Pyricularia oryzae (strain 70-15 / ATCC MYA-4617 / FGSC 8958)</name>
    <name type="common">Rice blast fungus</name>
    <name type="synonym">Magnaporthe oryzae</name>
    <dbReference type="NCBI Taxonomy" id="242507"/>
    <lineage>
        <taxon>Eukaryota</taxon>
        <taxon>Fungi</taxon>
        <taxon>Dikarya</taxon>
        <taxon>Ascomycota</taxon>
        <taxon>Pezizomycotina</taxon>
        <taxon>Sordariomycetes</taxon>
        <taxon>Sordariomycetidae</taxon>
        <taxon>Magnaporthales</taxon>
        <taxon>Pyriculariaceae</taxon>
        <taxon>Pyricularia</taxon>
    </lineage>
</organism>
<comment type="function">
    <text evidence="1">Catalyzes the NAD(H)-dependent interconversion of D-fructose and D-mannitol in the mannitol metabolic pathway.</text>
</comment>
<comment type="catalytic activity">
    <reaction>
        <text>D-mannitol + NAD(+) = D-fructose + NADH + H(+)</text>
        <dbReference type="Rhea" id="RHEA:12084"/>
        <dbReference type="ChEBI" id="CHEBI:15378"/>
        <dbReference type="ChEBI" id="CHEBI:16899"/>
        <dbReference type="ChEBI" id="CHEBI:37721"/>
        <dbReference type="ChEBI" id="CHEBI:57540"/>
        <dbReference type="ChEBI" id="CHEBI:57945"/>
        <dbReference type="EC" id="1.1.1.67"/>
    </reaction>
</comment>
<comment type="subunit">
    <text evidence="1">Monomer.</text>
</comment>
<comment type="similarity">
    <text evidence="2">Belongs to the mannitol dehydrogenase family.</text>
</comment>
<name>M2DH_PYRO7</name>
<feature type="chain" id="PRO_0000371545" description="Mannitol 2-dehydrogenase">
    <location>
        <begin position="1"/>
        <end position="502"/>
    </location>
</feature>
<feature type="binding site" evidence="1">
    <location>
        <begin position="35"/>
        <end position="46"/>
    </location>
    <ligand>
        <name>NAD(+)</name>
        <dbReference type="ChEBI" id="CHEBI:57540"/>
    </ligand>
</feature>
<reference key="1">
    <citation type="submission" date="2005-01" db="EMBL/GenBank/DDBJ databases">
        <title>The sequence of Magnaporthe grisea chromosome 7.</title>
        <authorList>
            <person name="Thon M.R."/>
            <person name="Pan H."/>
            <person name="Diener A."/>
            <person name="Papalas J."/>
            <person name="Taro A."/>
            <person name="Mitchell T.K."/>
            <person name="Dean R.A."/>
        </authorList>
    </citation>
    <scope>NUCLEOTIDE SEQUENCE [LARGE SCALE GENOMIC DNA]</scope>
    <source>
        <strain>70-15 / ATCC MYA-4617 / FGSC 8958</strain>
    </source>
</reference>
<reference key="2">
    <citation type="journal article" date="2005" name="Nature">
        <title>The genome sequence of the rice blast fungus Magnaporthe grisea.</title>
        <authorList>
            <person name="Dean R.A."/>
            <person name="Talbot N.J."/>
            <person name="Ebbole D.J."/>
            <person name="Farman M.L."/>
            <person name="Mitchell T.K."/>
            <person name="Orbach M.J."/>
            <person name="Thon M.R."/>
            <person name="Kulkarni R."/>
            <person name="Xu J.-R."/>
            <person name="Pan H."/>
            <person name="Read N.D."/>
            <person name="Lee Y.-H."/>
            <person name="Carbone I."/>
            <person name="Brown D."/>
            <person name="Oh Y.Y."/>
            <person name="Donofrio N."/>
            <person name="Jeong J.S."/>
            <person name="Soanes D.M."/>
            <person name="Djonovic S."/>
            <person name="Kolomiets E."/>
            <person name="Rehmeyer C."/>
            <person name="Li W."/>
            <person name="Harding M."/>
            <person name="Kim S."/>
            <person name="Lebrun M.-H."/>
            <person name="Bohnert H."/>
            <person name="Coughlan S."/>
            <person name="Butler J."/>
            <person name="Calvo S.E."/>
            <person name="Ma L.-J."/>
            <person name="Nicol R."/>
            <person name="Purcell S."/>
            <person name="Nusbaum C."/>
            <person name="Galagan J.E."/>
            <person name="Birren B.W."/>
        </authorList>
    </citation>
    <scope>NUCLEOTIDE SEQUENCE [LARGE SCALE GENOMIC DNA]</scope>
    <source>
        <strain>70-15 / ATCC MYA-4617 / FGSC 8958</strain>
    </source>
</reference>